<gene>
    <name evidence="1" type="primary">rimP</name>
    <name type="ordered locus">HPSH_02090</name>
</gene>
<keyword id="KW-0963">Cytoplasm</keyword>
<keyword id="KW-0690">Ribosome biogenesis</keyword>
<reference key="1">
    <citation type="submission" date="2008-05" db="EMBL/GenBank/DDBJ databases">
        <title>Genome sequence of Helicobacter pylori from the remote Amazon: traces of Asian ancestry of the first Americans.</title>
        <authorList>
            <person name="Kersulyte D."/>
            <person name="Kalia A."/>
            <person name="Gilman R.H."/>
            <person name="Berg D.E."/>
        </authorList>
    </citation>
    <scope>NUCLEOTIDE SEQUENCE [LARGE SCALE GENOMIC DNA]</scope>
    <source>
        <strain>Shi470</strain>
    </source>
</reference>
<evidence type="ECO:0000255" key="1">
    <source>
        <dbReference type="HAMAP-Rule" id="MF_01077"/>
    </source>
</evidence>
<protein>
    <recommendedName>
        <fullName evidence="1">Ribosome maturation factor RimP</fullName>
    </recommendedName>
</protein>
<dbReference type="EMBL" id="CP001072">
    <property type="protein sequence ID" value="ACD47868.1"/>
    <property type="molecule type" value="Genomic_DNA"/>
</dbReference>
<dbReference type="RefSeq" id="WP_000162226.1">
    <property type="nucleotide sequence ID" value="NC_010698.2"/>
</dbReference>
<dbReference type="SMR" id="B2USN6"/>
<dbReference type="KEGG" id="hps:HPSH_02090"/>
<dbReference type="HOGENOM" id="CLU_070525_2_2_7"/>
<dbReference type="GO" id="GO:0005829">
    <property type="term" value="C:cytosol"/>
    <property type="evidence" value="ECO:0007669"/>
    <property type="project" value="TreeGrafter"/>
</dbReference>
<dbReference type="GO" id="GO:0000028">
    <property type="term" value="P:ribosomal small subunit assembly"/>
    <property type="evidence" value="ECO:0007669"/>
    <property type="project" value="TreeGrafter"/>
</dbReference>
<dbReference type="GO" id="GO:0006412">
    <property type="term" value="P:translation"/>
    <property type="evidence" value="ECO:0007669"/>
    <property type="project" value="TreeGrafter"/>
</dbReference>
<dbReference type="CDD" id="cd01734">
    <property type="entry name" value="YlxS_C"/>
    <property type="match status" value="1"/>
</dbReference>
<dbReference type="FunFam" id="3.30.300.70:FF:000005">
    <property type="entry name" value="Ribosome maturation factor RimP"/>
    <property type="match status" value="1"/>
</dbReference>
<dbReference type="Gene3D" id="3.30.300.70">
    <property type="entry name" value="RimP-like superfamily, N-terminal"/>
    <property type="match status" value="1"/>
</dbReference>
<dbReference type="HAMAP" id="MF_01077">
    <property type="entry name" value="RimP"/>
    <property type="match status" value="1"/>
</dbReference>
<dbReference type="InterPro" id="IPR003728">
    <property type="entry name" value="Ribosome_maturation_RimP"/>
</dbReference>
<dbReference type="InterPro" id="IPR028998">
    <property type="entry name" value="RimP_C"/>
</dbReference>
<dbReference type="InterPro" id="IPR028989">
    <property type="entry name" value="RimP_N"/>
</dbReference>
<dbReference type="InterPro" id="IPR035956">
    <property type="entry name" value="RimP_N_sf"/>
</dbReference>
<dbReference type="PANTHER" id="PTHR33867">
    <property type="entry name" value="RIBOSOME MATURATION FACTOR RIMP"/>
    <property type="match status" value="1"/>
</dbReference>
<dbReference type="PANTHER" id="PTHR33867:SF1">
    <property type="entry name" value="RIBOSOME MATURATION FACTOR RIMP"/>
    <property type="match status" value="1"/>
</dbReference>
<dbReference type="Pfam" id="PF17384">
    <property type="entry name" value="DUF150_C"/>
    <property type="match status" value="1"/>
</dbReference>
<dbReference type="Pfam" id="PF02576">
    <property type="entry name" value="RimP_N"/>
    <property type="match status" value="1"/>
</dbReference>
<dbReference type="SUPFAM" id="SSF75420">
    <property type="entry name" value="YhbC-like, N-terminal domain"/>
    <property type="match status" value="1"/>
</dbReference>
<organism>
    <name type="scientific">Helicobacter pylori (strain Shi470)</name>
    <dbReference type="NCBI Taxonomy" id="512562"/>
    <lineage>
        <taxon>Bacteria</taxon>
        <taxon>Pseudomonadati</taxon>
        <taxon>Campylobacterota</taxon>
        <taxon>Epsilonproteobacteria</taxon>
        <taxon>Campylobacterales</taxon>
        <taxon>Helicobacteraceae</taxon>
        <taxon>Helicobacter</taxon>
    </lineage>
</organism>
<sequence>MTKKIEEKIEGVIESLGYLLYDVSLIKENEQHVLRVSLKNPNGAVSLDICQQVSEIISPLLDVCDFIQDAYILEVSSMGLERTLKTPKHFKLSLGEKVEVKLTNKESFQAVLKDANDLSADFELEDHAIKSVEYKDLKKVKTLFEW</sequence>
<comment type="function">
    <text evidence="1">Required for maturation of 30S ribosomal subunits.</text>
</comment>
<comment type="subcellular location">
    <subcellularLocation>
        <location evidence="1">Cytoplasm</location>
    </subcellularLocation>
</comment>
<comment type="similarity">
    <text evidence="1">Belongs to the RimP family.</text>
</comment>
<name>RIMP_HELPS</name>
<proteinExistence type="inferred from homology"/>
<feature type="chain" id="PRO_1000136771" description="Ribosome maturation factor RimP">
    <location>
        <begin position="1"/>
        <end position="146"/>
    </location>
</feature>
<accession>B2USN6</accession>